<reference key="1">
    <citation type="journal article" date="2008" name="Genetics">
        <title>Dietary change and adaptive evolution of enamelin in humans and among primates.</title>
        <authorList>
            <person name="Kelley J.L."/>
            <person name="Swanson W.J."/>
        </authorList>
    </citation>
    <scope>NUCLEOTIDE SEQUENCE [GENOMIC DNA]</scope>
    <scope>VARIANTS THR-648 AND GLN-763</scope>
</reference>
<reference key="2">
    <citation type="submission" date="1999-02" db="EMBL/GenBank/DDBJ databases">
        <title>cDNA sequence of human enamelin.</title>
        <authorList>
            <person name="Hu C.-C."/>
            <person name="Qian Q."/>
            <person name="Zhang C."/>
            <person name="Fukae M."/>
            <person name="Uchida T."/>
            <person name="Simmer J.P."/>
        </authorList>
    </citation>
    <scope>NUCLEOTIDE SEQUENCE [MRNA]</scope>
</reference>
<reference key="3">
    <citation type="submission" date="2005-07" db="EMBL/GenBank/DDBJ databases">
        <authorList>
            <person name="Mural R.J."/>
            <person name="Istrail S."/>
            <person name="Sutton G.G."/>
            <person name="Florea L."/>
            <person name="Halpern A.L."/>
            <person name="Mobarry C.M."/>
            <person name="Lippert R."/>
            <person name="Walenz B."/>
            <person name="Shatkay H."/>
            <person name="Dew I."/>
            <person name="Miller J.R."/>
            <person name="Flanigan M.J."/>
            <person name="Edwards N.J."/>
            <person name="Bolanos R."/>
            <person name="Fasulo D."/>
            <person name="Halldorsson B.V."/>
            <person name="Hannenhalli S."/>
            <person name="Turner R."/>
            <person name="Yooseph S."/>
            <person name="Lu F."/>
            <person name="Nusskern D.R."/>
            <person name="Shue B.C."/>
            <person name="Zheng X.H."/>
            <person name="Zhong F."/>
            <person name="Delcher A.L."/>
            <person name="Huson D.H."/>
            <person name="Kravitz S.A."/>
            <person name="Mouchard L."/>
            <person name="Reinert K."/>
            <person name="Remington K.A."/>
            <person name="Clark A.G."/>
            <person name="Waterman M.S."/>
            <person name="Eichler E.E."/>
            <person name="Adams M.D."/>
            <person name="Hunkapiller M.W."/>
            <person name="Myers E.W."/>
            <person name="Venter J.C."/>
        </authorList>
    </citation>
    <scope>NUCLEOTIDE SEQUENCE [LARGE SCALE GENOMIC DNA]</scope>
</reference>
<reference key="4">
    <citation type="journal article" date="2004" name="Genome Res.">
        <title>The status, quality, and expansion of the NIH full-length cDNA project: the Mammalian Gene Collection (MGC).</title>
        <authorList>
            <consortium name="The MGC Project Team"/>
        </authorList>
    </citation>
    <scope>NUCLEOTIDE SEQUENCE [LARGE SCALE MRNA]</scope>
</reference>
<reference key="5">
    <citation type="journal article" date="2000" name="Eur. J. Oral Sci.">
        <title>Enamelin maps to human chromosome 4q21 within the autosomal dominant amelogenesis imperfecta locus.</title>
        <authorList>
            <person name="Dong J."/>
            <person name="Gu T.T."/>
            <person name="Simmons D."/>
            <person name="MacDougall M."/>
        </authorList>
    </citation>
    <scope>NUCLEOTIDE SEQUENCE [MRNA] OF 1014-1142</scope>
</reference>
<reference key="6">
    <citation type="journal article" date="2001" name="Hum. Mol. Genet.">
        <title>Mutation of the gene encoding the enamel-specific protein, enamelin, causes autosomal-dominant amelogenesis imperfecta.</title>
        <authorList>
            <person name="Rajpar M.H."/>
            <person name="Harley K."/>
            <person name="Laing C."/>
            <person name="Davies R.M."/>
            <person name="Dixon M.J."/>
        </authorList>
    </citation>
    <scope>INVOLVEMENT IN AI1B</scope>
    <scope>TISSUE SPECIFICITY</scope>
</reference>
<reference key="7">
    <citation type="journal article" date="2002" name="Hum. Mol. Genet.">
        <title>A nonsense mutation in the enamelin gene causes local hypoplastic autosomal dominant amelogenesis imperfecta (AIH2).</title>
        <authorList>
            <person name="Mardh C.K."/>
            <person name="Backman B."/>
            <person name="Holmgren G."/>
            <person name="Hu J.C."/>
            <person name="Simmer J.P."/>
            <person name="Forsman-Semb K."/>
        </authorList>
    </citation>
    <scope>INVOLVEMENT IN AI1B</scope>
</reference>
<reference key="8">
    <citation type="journal article" date="2003" name="J. Med. Genet.">
        <title>Novel ENAM mutation responsible for autosomal recessive amelogenesis imperfecta and localised enamel defects.</title>
        <authorList>
            <person name="Hart T.C."/>
            <person name="Hart P.S."/>
            <person name="Gorry M.C."/>
            <person name="Michalec M.D."/>
            <person name="Ryu O.H."/>
            <person name="Uygur C."/>
            <person name="Ozdemir D."/>
            <person name="Firatli S."/>
            <person name="Aren G."/>
            <person name="Firatli E."/>
        </authorList>
    </citation>
    <scope>INVOLVEMENT IN AI1C</scope>
</reference>
<reference key="9">
    <citation type="journal article" date="2015" name="Elife">
        <title>A secretory kinase complex regulates extracellular protein phosphorylation.</title>
        <authorList>
            <person name="Cui J."/>
            <person name="Xiao J."/>
            <person name="Tagliabracci V.S."/>
            <person name="Wen J."/>
            <person name="Rahdar M."/>
            <person name="Dixon J.E."/>
        </authorList>
    </citation>
    <scope>PHOSPHORYLATION AT SER-191 AND SER-216</scope>
    <scope>VARIANT AI1B LEU-216</scope>
    <scope>VARIANT AI1C LEU-216</scope>
    <scope>CHARACTERIZATION OF VARIANT AI1B LEU-216</scope>
    <scope>CHARACTERIZATION OF VARIANT AI1C LEU-216</scope>
    <scope>MUTAGENESIS OF SER-191</scope>
</reference>
<reference key="10">
    <citation type="journal article" date="2010" name="J. Dent. Res.">
        <title>Altered enamelin phosphorylation site causes amelogenesis imperfecta.</title>
        <authorList>
            <person name="Chan H.C."/>
            <person name="Mai L."/>
            <person name="Oikonomopoulou A."/>
            <person name="Chan H.L."/>
            <person name="Richardson A.S."/>
            <person name="Wang S.K."/>
            <person name="Simmer J.P."/>
            <person name="Hu J.C."/>
        </authorList>
    </citation>
    <scope>VARIANT AI1B LEU-216</scope>
    <scope>VARIANT AI1C LEU-216</scope>
</reference>
<accession>Q9NRM1</accession>
<accession>Q17RI5</accession>
<accession>Q9H3D1</accession>
<comment type="function">
    <text evidence="1">Involved in the mineralization and structural organization of enamel. Involved in the extension of enamel during the secretory stage of dental enamel formation.</text>
</comment>
<comment type="interaction">
    <interactant intactId="EBI-11892601">
        <id>Q9NRM1</id>
    </interactant>
    <interactant intactId="EBI-7147442">
        <id>Q8IXL6</id>
        <label>FAM20C</label>
    </interactant>
    <organismsDiffer>false</organismsDiffer>
    <experiments>2</experiments>
</comment>
<comment type="subcellular location">
    <subcellularLocation>
        <location evidence="1">Secreted</location>
        <location evidence="1">Extracellular space</location>
        <location evidence="1">Extracellular matrix</location>
    </subcellularLocation>
</comment>
<comment type="tissue specificity">
    <text evidence="4">Expressed in tooth particularly in odontoblast, ameloblast and cementoblast.</text>
</comment>
<comment type="PTM">
    <text evidence="9">Phosphorylated by FAM20C in vitro.</text>
</comment>
<comment type="disease" evidence="4 5 8 9">
    <disease id="DI-00089">
        <name>Amelogenesis imperfecta 1B</name>
        <acronym>AI1B</acronym>
        <description>An autosomal dominant defect of enamel formation. Clinical manifestations may be variable. Some cases present with generalized enamel hypoplasia resulting in small, smooth, yellow and widely spaced teeth (smooth hypoplastic AI). Others show horizontal rows of pits, grooves or a hypoplastic area in the enamel (local hypoplastic AI).</description>
        <dbReference type="MIM" id="104500"/>
    </disease>
    <text>The disease is caused by variants affecting the gene represented in this entry.</text>
</comment>
<comment type="disease" evidence="6 8 9">
    <disease id="DI-00090">
        <name>Amelogenesis imperfecta 1C</name>
        <acronym>AI1C</acronym>
        <description>An autosomal recessive defect of dental enamel formation. Teeth show local hypoplastic and unmineralized enamel, and a yellow-brown discoloration. Enamel defects can be associated with facial and oral features including vertical dysgnathia and anterior openbite malocclusion.</description>
        <dbReference type="MIM" id="204650"/>
    </disease>
    <text>The disease is caused by variants affecting the gene represented in this entry.</text>
</comment>
<proteinExistence type="evidence at protein level"/>
<gene>
    <name type="primary">ENAM</name>
</gene>
<sequence length="1142" mass="128785">MLVLRCRLGTSFPKLDNLVPKGKMKILLVFLGLLGNSVAMPMHMPRMPGFSSKSEEMMRYNQFNFMNGPHMAHLGPFFGNGLPQQFPQYQMPMWPQPPPNTWHPRKSSAPKRHNKTDQTQETQKPNQTQSKKPPQKRPLKQPSHNQPQPEEEAQPPQAFPPFGNGLFPYQQPPWQIPQRLPPPGYGRPPISNEEGGNPYFGYFGYHGFGGRPPYYSEEMFEQDFEKPKEEDPPKAESPGTEPTANSTVTETNSTQPNPKGSQGGNDTSPTGNSTPGLNTGNNPPAQNGIGPLPAVNASGQGGPGSQIPWRPSQPNIRENHPYPNIRNFPSGRQWYFTGTVMGHRQNRPFYRNQQVQRGPRWNFFAWERKQVARPGNPVYHKAYPPTSRGNYPNYAGNPANLRRKPQGPNKHPVGTTVAPLGPKPGPVVRNEKIQNPKEKPLGPKEQIIVPTKNPTSPWRNSQQYEVNKSNYKLPHSEGYMPVPNFNSVDQHENSYYPRGDSRKVPNSDGQTQSQNLPKGIVLGSRRMPYESETNQSELKHSSYQPAVYPEEIPSPAKEHFPAGRNTWDHQEISPPFKEDPGRQEEHLPHPSHGSRGSVFYPEYNPYDPRENSPYLRGNTWDERDDSPNTMGQKESPLYPINTPDQKEIVPYNEEDPVDPTGDEVFPGQNRWGEELSFKGGPTVRHYEGEQYTSNQPKEYLPYSLDNPSKPREDFYYSEFYPWSPDENFPSYNTASTMPPPIESRGYYVNNAAGPEESTLFPSRNSWDHRIQAQGQRERRPYFNRNIWDQATHLQKAPARPPDQKGNQPYYSNTPAGLQKNPIWHEGENLNYGMQITRMNSPEREHSSFPNFIPPSYPSGQKEAHLFHLSQRGSCCAGSSTGPKDNPLALQDYTPSYGLAPGENQDTSPLYTDGSHTKQTRDIISPTSILPGQRNSSEKRESQNPFRDDVSTLRRNTPCSIKNQLGQKEIMPFPEASSLQSKNTPCLKNDLGGDGNNILEQVFEDNQLNERTVDLTPEQLVIGTPDEGSNPEGIQSQVQENESERQQQRPSNILHLPCFGSKLAKHHSSTTGTPSSDGRQSPFDGDSITPTENPNTLVELATEEQFKSINVDPLDADEHSPFEFLQRGTNVQDQVQDCLLLQA</sequence>
<feature type="signal peptide" evidence="2">
    <location>
        <begin position="1"/>
        <end position="39"/>
    </location>
</feature>
<feature type="chain" id="PRO_0000021174" description="Enamelin">
    <location>
        <begin position="40"/>
        <end position="1142"/>
    </location>
</feature>
<feature type="region of interest" description="Disordered" evidence="3">
    <location>
        <begin position="88"/>
        <end position="193"/>
    </location>
</feature>
<feature type="region of interest" description="Disordered" evidence="3">
    <location>
        <begin position="214"/>
        <end position="326"/>
    </location>
</feature>
<feature type="region of interest" description="Disordered" evidence="3">
    <location>
        <begin position="398"/>
        <end position="671"/>
    </location>
</feature>
<feature type="region of interest" description="Disordered" evidence="3">
    <location>
        <begin position="874"/>
        <end position="955"/>
    </location>
</feature>
<feature type="region of interest" description="Disordered" evidence="3">
    <location>
        <begin position="1020"/>
        <end position="1048"/>
    </location>
</feature>
<feature type="region of interest" description="Disordered" evidence="3">
    <location>
        <begin position="1062"/>
        <end position="1092"/>
    </location>
</feature>
<feature type="compositionally biased region" description="Basic residues" evidence="3">
    <location>
        <begin position="103"/>
        <end position="114"/>
    </location>
</feature>
<feature type="compositionally biased region" description="Polar residues" evidence="3">
    <location>
        <begin position="117"/>
        <end position="128"/>
    </location>
</feature>
<feature type="compositionally biased region" description="Low complexity" evidence="3">
    <location>
        <begin position="140"/>
        <end position="162"/>
    </location>
</feature>
<feature type="compositionally biased region" description="Pro residues" evidence="3">
    <location>
        <begin position="170"/>
        <end position="186"/>
    </location>
</feature>
<feature type="compositionally biased region" description="Basic and acidic residues" evidence="3">
    <location>
        <begin position="223"/>
        <end position="234"/>
    </location>
</feature>
<feature type="compositionally biased region" description="Polar residues" evidence="3">
    <location>
        <begin position="240"/>
        <end position="285"/>
    </location>
</feature>
<feature type="compositionally biased region" description="Basic and acidic residues" evidence="3">
    <location>
        <begin position="429"/>
        <end position="442"/>
    </location>
</feature>
<feature type="compositionally biased region" description="Polar residues" evidence="3">
    <location>
        <begin position="452"/>
        <end position="470"/>
    </location>
</feature>
<feature type="compositionally biased region" description="Polar residues" evidence="3">
    <location>
        <begin position="507"/>
        <end position="516"/>
    </location>
</feature>
<feature type="compositionally biased region" description="Polar residues" evidence="3">
    <location>
        <begin position="531"/>
        <end position="544"/>
    </location>
</feature>
<feature type="compositionally biased region" description="Basic and acidic residues" evidence="3">
    <location>
        <begin position="556"/>
        <end position="588"/>
    </location>
</feature>
<feature type="compositionally biased region" description="Acidic residues" evidence="3">
    <location>
        <begin position="652"/>
        <end position="661"/>
    </location>
</feature>
<feature type="compositionally biased region" description="Polar residues" evidence="3">
    <location>
        <begin position="924"/>
        <end position="934"/>
    </location>
</feature>
<feature type="compositionally biased region" description="Basic and acidic residues" evidence="3">
    <location>
        <begin position="935"/>
        <end position="951"/>
    </location>
</feature>
<feature type="compositionally biased region" description="Polar residues" evidence="3">
    <location>
        <begin position="1068"/>
        <end position="1078"/>
    </location>
</feature>
<feature type="modified residue" description="Phosphoserine" evidence="11">
    <location>
        <position position="191"/>
    </location>
</feature>
<feature type="modified residue" description="Phosphoserine" evidence="11">
    <location>
        <position position="216"/>
    </location>
</feature>
<feature type="glycosylation site" description="N-linked (GlcNAc...) asparagine" evidence="2">
    <location>
        <position position="114"/>
    </location>
</feature>
<feature type="glycosylation site" description="N-linked (GlcNAc...) asparagine" evidence="2">
    <location>
        <position position="126"/>
    </location>
</feature>
<feature type="glycosylation site" description="N-linked (GlcNAc...) asparagine" evidence="2">
    <location>
        <position position="245"/>
    </location>
</feature>
<feature type="glycosylation site" description="N-linked (GlcNAc...) asparagine" evidence="2">
    <location>
        <position position="252"/>
    </location>
</feature>
<feature type="glycosylation site" description="N-linked (GlcNAc...) asparagine" evidence="2">
    <location>
        <position position="265"/>
    </location>
</feature>
<feature type="glycosylation site" description="N-linked (GlcNAc...) asparagine" evidence="2">
    <location>
        <position position="296"/>
    </location>
</feature>
<feature type="glycosylation site" description="N-linked (GlcNAc...) asparagine" evidence="2">
    <location>
        <position position="467"/>
    </location>
</feature>
<feature type="glycosylation site" description="N-linked (GlcNAc...) asparagine" evidence="2">
    <location>
        <position position="534"/>
    </location>
</feature>
<feature type="glycosylation site" description="N-linked (GlcNAc...) asparagine" evidence="2">
    <location>
        <position position="934"/>
    </location>
</feature>
<feature type="glycosylation site" description="N-linked (GlcNAc...) asparagine" evidence="2">
    <location>
        <position position="1040"/>
    </location>
</feature>
<feature type="sequence variant" id="VAR_073665" description="In AI1B and AI1C; decreased phosphorylation by FAM20C; dbSNP:rs867263935." evidence="8 11">
    <original>S</original>
    <variation>L</variation>
    <location>
        <position position="216"/>
    </location>
</feature>
<feature type="sequence variant" id="VAR_024311" description="In dbSNP:rs2609428.">
    <original>F</original>
    <variation>L</variation>
    <location>
        <position position="576"/>
    </location>
</feature>
<feature type="sequence variant" id="VAR_024312" description="In dbSNP:rs7671281." evidence="7">
    <original>I</original>
    <variation>T</variation>
    <location>
        <position position="648"/>
    </location>
</feature>
<feature type="sequence variant" id="VAR_020105" description="In dbSNP:rs3796703.">
    <original>P</original>
    <variation>L</variation>
    <location>
        <position position="724"/>
    </location>
</feature>
<feature type="sequence variant" id="VAR_024313" description="In dbSNP:rs3796704." evidence="7">
    <original>R</original>
    <variation>Q</variation>
    <location>
        <position position="763"/>
    </location>
</feature>
<feature type="sequence variant" id="VAR_047076" description="In dbSNP:rs3796705.">
    <original>D</original>
    <variation>G</variation>
    <location>
        <position position="767"/>
    </location>
</feature>
<feature type="mutagenesis site" description="Decreased phosphorylation by FAM20C." evidence="9">
    <original>S</original>
    <variation>A</variation>
    <location>
        <position position="191"/>
    </location>
</feature>
<feature type="sequence conflict" description="In Ref. 2; AAG43242." evidence="10" ref="2">
    <original>P</original>
    <variation>S</variation>
    <location>
        <position position="284"/>
    </location>
</feature>
<feature type="sequence conflict" description="In Ref. 2; AAG43242." evidence="10" ref="2">
    <original>Q</original>
    <variation>R</variation>
    <location>
        <position position="286"/>
    </location>
</feature>
<feature type="sequence conflict" description="In Ref. 2; AAG43242." evidence="10" ref="2">
    <original>D</original>
    <variation>G</variation>
    <location>
        <position position="948"/>
    </location>
</feature>
<name>ENAM_HUMAN</name>
<dbReference type="EMBL" id="EU482096">
    <property type="protein sequence ID" value="ACA43029.1"/>
    <property type="molecule type" value="Genomic_DNA"/>
</dbReference>
<dbReference type="EMBL" id="AF125373">
    <property type="protein sequence ID" value="AAG43242.1"/>
    <property type="molecule type" value="mRNA"/>
</dbReference>
<dbReference type="EMBL" id="CH471057">
    <property type="protein sequence ID" value="EAX05625.1"/>
    <property type="molecule type" value="Genomic_DNA"/>
</dbReference>
<dbReference type="EMBL" id="BC117308">
    <property type="protein sequence ID" value="AAI17309.1"/>
    <property type="molecule type" value="mRNA"/>
</dbReference>
<dbReference type="EMBL" id="BC117310">
    <property type="protein sequence ID" value="AAI17311.1"/>
    <property type="molecule type" value="mRNA"/>
</dbReference>
<dbReference type="EMBL" id="AF210247">
    <property type="protein sequence ID" value="AAF73847.1"/>
    <property type="molecule type" value="mRNA"/>
</dbReference>
<dbReference type="CCDS" id="CCDS3544.2"/>
<dbReference type="RefSeq" id="NP_114095.2">
    <property type="nucleotide sequence ID" value="NM_031889.3"/>
</dbReference>
<dbReference type="RefSeq" id="XP_006714119.1">
    <property type="nucleotide sequence ID" value="XM_006714056.3"/>
</dbReference>
<dbReference type="BioGRID" id="115422">
    <property type="interactions" value="3"/>
</dbReference>
<dbReference type="FunCoup" id="Q9NRM1">
    <property type="interactions" value="26"/>
</dbReference>
<dbReference type="IntAct" id="Q9NRM1">
    <property type="interactions" value="4"/>
</dbReference>
<dbReference type="MINT" id="Q9NRM1"/>
<dbReference type="STRING" id="9606.ENSP00000379383"/>
<dbReference type="GlyCosmos" id="Q9NRM1">
    <property type="glycosylation" value="10 sites, No reported glycans"/>
</dbReference>
<dbReference type="GlyGen" id="Q9NRM1">
    <property type="glycosylation" value="11 sites"/>
</dbReference>
<dbReference type="iPTMnet" id="Q9NRM1"/>
<dbReference type="PhosphoSitePlus" id="Q9NRM1"/>
<dbReference type="BioMuta" id="ENAM"/>
<dbReference type="DMDM" id="212276506"/>
<dbReference type="jPOST" id="Q9NRM1"/>
<dbReference type="MassIVE" id="Q9NRM1"/>
<dbReference type="PaxDb" id="9606-ENSP00000379383"/>
<dbReference type="PeptideAtlas" id="Q9NRM1"/>
<dbReference type="Antibodypedia" id="24350">
    <property type="antibodies" value="80 antibodies from 14 providers"/>
</dbReference>
<dbReference type="DNASU" id="10117"/>
<dbReference type="Ensembl" id="ENST00000396073.4">
    <property type="protein sequence ID" value="ENSP00000379383.4"/>
    <property type="gene ID" value="ENSG00000132464.13"/>
</dbReference>
<dbReference type="GeneID" id="10117"/>
<dbReference type="KEGG" id="hsa:10117"/>
<dbReference type="MANE-Select" id="ENST00000396073.4">
    <property type="protein sequence ID" value="ENSP00000379383.4"/>
    <property type="RefSeq nucleotide sequence ID" value="NM_031889.3"/>
    <property type="RefSeq protein sequence ID" value="NP_114095.2"/>
</dbReference>
<dbReference type="UCSC" id="uc011caw.2">
    <property type="organism name" value="human"/>
</dbReference>
<dbReference type="AGR" id="HGNC:3344"/>
<dbReference type="CTD" id="10117"/>
<dbReference type="DisGeNET" id="10117"/>
<dbReference type="GeneCards" id="ENAM"/>
<dbReference type="HGNC" id="HGNC:3344">
    <property type="gene designation" value="ENAM"/>
</dbReference>
<dbReference type="HPA" id="ENSG00000132464">
    <property type="expression patterns" value="Tissue enhanced (epididymis, heart muscle, kidney, skeletal muscle)"/>
</dbReference>
<dbReference type="MalaCards" id="ENAM"/>
<dbReference type="MIM" id="104500">
    <property type="type" value="phenotype"/>
</dbReference>
<dbReference type="MIM" id="204650">
    <property type="type" value="phenotype"/>
</dbReference>
<dbReference type="MIM" id="606585">
    <property type="type" value="gene"/>
</dbReference>
<dbReference type="neXtProt" id="NX_Q9NRM1"/>
<dbReference type="OpenTargets" id="ENSG00000132464"/>
<dbReference type="Orphanet" id="100031">
    <property type="disease" value="Hypoplastic amelogenesis imperfecta"/>
</dbReference>
<dbReference type="PharmGKB" id="PA27781"/>
<dbReference type="VEuPathDB" id="HostDB:ENSG00000132464"/>
<dbReference type="eggNOG" id="ENOG502R69E">
    <property type="taxonomic scope" value="Eukaryota"/>
</dbReference>
<dbReference type="GeneTree" id="ENSGT00440000037826"/>
<dbReference type="HOGENOM" id="CLU_280412_0_0_1"/>
<dbReference type="InParanoid" id="Q9NRM1"/>
<dbReference type="OMA" id="WNSWDHR"/>
<dbReference type="OrthoDB" id="9900243at2759"/>
<dbReference type="PAN-GO" id="Q9NRM1">
    <property type="GO annotations" value="5 GO annotations based on evolutionary models"/>
</dbReference>
<dbReference type="PhylomeDB" id="Q9NRM1"/>
<dbReference type="TreeFam" id="TF337278"/>
<dbReference type="PathwayCommons" id="Q9NRM1"/>
<dbReference type="Reactome" id="R-HSA-381426">
    <property type="pathway name" value="Regulation of Insulin-like Growth Factor (IGF) transport and uptake by Insulin-like Growth Factor Binding Proteins (IGFBPs)"/>
</dbReference>
<dbReference type="Reactome" id="R-HSA-8957275">
    <property type="pathway name" value="Post-translational protein phosphorylation"/>
</dbReference>
<dbReference type="SignaLink" id="Q9NRM1"/>
<dbReference type="BioGRID-ORCS" id="10117">
    <property type="hits" value="9 hits in 1142 CRISPR screens"/>
</dbReference>
<dbReference type="GeneWiki" id="ENAM"/>
<dbReference type="GenomeRNAi" id="10117"/>
<dbReference type="Pharos" id="Q9NRM1">
    <property type="development level" value="Tbio"/>
</dbReference>
<dbReference type="PRO" id="PR:Q9NRM1"/>
<dbReference type="Proteomes" id="UP000005640">
    <property type="component" value="Chromosome 4"/>
</dbReference>
<dbReference type="RNAct" id="Q9NRM1">
    <property type="molecule type" value="protein"/>
</dbReference>
<dbReference type="Bgee" id="ENSG00000132464">
    <property type="expression patterns" value="Expressed in male germ line stem cell (sensu Vertebrata) in testis and 70 other cell types or tissues"/>
</dbReference>
<dbReference type="ExpressionAtlas" id="Q9NRM1">
    <property type="expression patterns" value="baseline and differential"/>
</dbReference>
<dbReference type="GO" id="GO:0005788">
    <property type="term" value="C:endoplasmic reticulum lumen"/>
    <property type="evidence" value="ECO:0000304"/>
    <property type="project" value="Reactome"/>
</dbReference>
<dbReference type="GO" id="GO:0031012">
    <property type="term" value="C:extracellular matrix"/>
    <property type="evidence" value="ECO:0000318"/>
    <property type="project" value="GO_Central"/>
</dbReference>
<dbReference type="GO" id="GO:0005576">
    <property type="term" value="C:extracellular region"/>
    <property type="evidence" value="ECO:0007669"/>
    <property type="project" value="UniProtKB-KW"/>
</dbReference>
<dbReference type="GO" id="GO:0030345">
    <property type="term" value="F:structural constituent of tooth enamel"/>
    <property type="evidence" value="ECO:0000318"/>
    <property type="project" value="GO_Central"/>
</dbReference>
<dbReference type="GO" id="GO:0036305">
    <property type="term" value="P:ameloblast differentiation"/>
    <property type="evidence" value="ECO:0000318"/>
    <property type="project" value="GO_Central"/>
</dbReference>
<dbReference type="GO" id="GO:0097186">
    <property type="term" value="P:amelogenesis"/>
    <property type="evidence" value="ECO:0000318"/>
    <property type="project" value="GO_Central"/>
</dbReference>
<dbReference type="GO" id="GO:0031214">
    <property type="term" value="P:biomineral tissue development"/>
    <property type="evidence" value="ECO:0007669"/>
    <property type="project" value="UniProtKB-KW"/>
</dbReference>
<dbReference type="GO" id="GO:0070175">
    <property type="term" value="P:positive regulation of enamel mineralization"/>
    <property type="evidence" value="ECO:0000318"/>
    <property type="project" value="GO_Central"/>
</dbReference>
<dbReference type="InterPro" id="IPR015673">
    <property type="entry name" value="Enamelin"/>
</dbReference>
<dbReference type="PANTHER" id="PTHR16784">
    <property type="entry name" value="ENAMELIN"/>
    <property type="match status" value="1"/>
</dbReference>
<dbReference type="PANTHER" id="PTHR16784:SF2">
    <property type="entry name" value="ENAMELIN"/>
    <property type="match status" value="1"/>
</dbReference>
<dbReference type="Pfam" id="PF15362">
    <property type="entry name" value="Enamelin"/>
    <property type="match status" value="1"/>
</dbReference>
<protein>
    <recommendedName>
        <fullName>Enamelin</fullName>
    </recommendedName>
</protein>
<organism>
    <name type="scientific">Homo sapiens</name>
    <name type="common">Human</name>
    <dbReference type="NCBI Taxonomy" id="9606"/>
    <lineage>
        <taxon>Eukaryota</taxon>
        <taxon>Metazoa</taxon>
        <taxon>Chordata</taxon>
        <taxon>Craniata</taxon>
        <taxon>Vertebrata</taxon>
        <taxon>Euteleostomi</taxon>
        <taxon>Mammalia</taxon>
        <taxon>Eutheria</taxon>
        <taxon>Euarchontoglires</taxon>
        <taxon>Primates</taxon>
        <taxon>Haplorrhini</taxon>
        <taxon>Catarrhini</taxon>
        <taxon>Hominidae</taxon>
        <taxon>Homo</taxon>
    </lineage>
</organism>
<keyword id="KW-0986">Amelogenesis imperfecta</keyword>
<keyword id="KW-0091">Biomineralization</keyword>
<keyword id="KW-0225">Disease variant</keyword>
<keyword id="KW-0272">Extracellular matrix</keyword>
<keyword id="KW-0325">Glycoprotein</keyword>
<keyword id="KW-0597">Phosphoprotein</keyword>
<keyword id="KW-1267">Proteomics identification</keyword>
<keyword id="KW-1185">Reference proteome</keyword>
<keyword id="KW-0964">Secreted</keyword>
<keyword id="KW-0732">Signal</keyword>
<evidence type="ECO:0000250" key="1">
    <source>
        <dbReference type="UniProtKB" id="O97939"/>
    </source>
</evidence>
<evidence type="ECO:0000255" key="2"/>
<evidence type="ECO:0000256" key="3">
    <source>
        <dbReference type="SAM" id="MobiDB-lite"/>
    </source>
</evidence>
<evidence type="ECO:0000269" key="4">
    <source>
    </source>
</evidence>
<evidence type="ECO:0000269" key="5">
    <source>
    </source>
</evidence>
<evidence type="ECO:0000269" key="6">
    <source>
    </source>
</evidence>
<evidence type="ECO:0000269" key="7">
    <source>
    </source>
</evidence>
<evidence type="ECO:0000269" key="8">
    <source>
    </source>
</evidence>
<evidence type="ECO:0000269" key="9">
    <source>
    </source>
</evidence>
<evidence type="ECO:0000305" key="10"/>
<evidence type="ECO:0000305" key="11">
    <source>
    </source>
</evidence>